<reference key="1">
    <citation type="journal article" date="2008" name="J. Bacteriol.">
        <title>Genome sequence of Staphylococcus aureus strain Newman and comparative analysis of staphylococcal genomes: polymorphism and evolution of two major pathogenicity islands.</title>
        <authorList>
            <person name="Baba T."/>
            <person name="Bae T."/>
            <person name="Schneewind O."/>
            <person name="Takeuchi F."/>
            <person name="Hiramatsu K."/>
        </authorList>
    </citation>
    <scope>NUCLEOTIDE SEQUENCE [LARGE SCALE GENOMIC DNA]</scope>
    <source>
        <strain>Newman</strain>
    </source>
</reference>
<protein>
    <recommendedName>
        <fullName evidence="1">Lipoprotein signal peptidase</fullName>
        <ecNumber evidence="1">3.4.23.36</ecNumber>
    </recommendedName>
    <alternativeName>
        <fullName evidence="1">Prolipoprotein signal peptidase</fullName>
    </alternativeName>
    <alternativeName>
        <fullName evidence="1">Signal peptidase II</fullName>
        <shortName evidence="1">SPase II</shortName>
    </alternativeName>
</protein>
<accession>A6QG97</accession>
<gene>
    <name evidence="1" type="primary">lspA</name>
    <name type="ordered locus">NWMN_1107</name>
</gene>
<keyword id="KW-0064">Aspartyl protease</keyword>
<keyword id="KW-1003">Cell membrane</keyword>
<keyword id="KW-0378">Hydrolase</keyword>
<keyword id="KW-0472">Membrane</keyword>
<keyword id="KW-0645">Protease</keyword>
<keyword id="KW-0812">Transmembrane</keyword>
<keyword id="KW-1133">Transmembrane helix</keyword>
<feature type="chain" id="PRO_1000071547" description="Lipoprotein signal peptidase">
    <location>
        <begin position="1"/>
        <end position="163"/>
    </location>
</feature>
<feature type="transmembrane region" description="Helical" evidence="1">
    <location>
        <begin position="11"/>
        <end position="31"/>
    </location>
</feature>
<feature type="transmembrane region" description="Helical" evidence="1">
    <location>
        <begin position="63"/>
        <end position="83"/>
    </location>
</feature>
<feature type="transmembrane region" description="Helical" evidence="1">
    <location>
        <begin position="88"/>
        <end position="108"/>
    </location>
</feature>
<feature type="transmembrane region" description="Helical" evidence="1">
    <location>
        <begin position="131"/>
        <end position="151"/>
    </location>
</feature>
<feature type="active site" evidence="1">
    <location>
        <position position="118"/>
    </location>
</feature>
<feature type="active site" evidence="1">
    <location>
        <position position="136"/>
    </location>
</feature>
<comment type="function">
    <text evidence="1">This protein specifically catalyzes the removal of signal peptides from prolipoproteins.</text>
</comment>
<comment type="catalytic activity">
    <reaction evidence="1">
        <text>Release of signal peptides from bacterial membrane prolipoproteins. Hydrolyzes -Xaa-Yaa-Zaa-|-(S,diacylglyceryl)Cys-, in which Xaa is hydrophobic (preferably Leu), and Yaa (Ala or Ser) and Zaa (Gly or Ala) have small, neutral side chains.</text>
        <dbReference type="EC" id="3.4.23.36"/>
    </reaction>
</comment>
<comment type="pathway">
    <text evidence="1">Protein modification; lipoprotein biosynthesis (signal peptide cleavage).</text>
</comment>
<comment type="subcellular location">
    <subcellularLocation>
        <location evidence="1">Cell membrane</location>
        <topology evidence="1">Multi-pass membrane protein</topology>
    </subcellularLocation>
</comment>
<comment type="similarity">
    <text evidence="1">Belongs to the peptidase A8 family.</text>
</comment>
<name>LSPA_STAAE</name>
<organism>
    <name type="scientific">Staphylococcus aureus (strain Newman)</name>
    <dbReference type="NCBI Taxonomy" id="426430"/>
    <lineage>
        <taxon>Bacteria</taxon>
        <taxon>Bacillati</taxon>
        <taxon>Bacillota</taxon>
        <taxon>Bacilli</taxon>
        <taxon>Bacillales</taxon>
        <taxon>Staphylococcaceae</taxon>
        <taxon>Staphylococcus</taxon>
    </lineage>
</organism>
<evidence type="ECO:0000255" key="1">
    <source>
        <dbReference type="HAMAP-Rule" id="MF_00161"/>
    </source>
</evidence>
<sequence>MHKKYFIGTSILIAVFVVIFDQVTKYIIATTMKIGDSFEVIPHFLNITSHRNNGAAWGILSGKMTFFFIITIIILIALVYFFIKDAQYNLFMQVAISLLFAGALGNFIDRILTGEVVDFIDTNIFGYDFPIFNIADSSLTIGVILIIIALLKDTSNKKEKEVK</sequence>
<proteinExistence type="inferred from homology"/>
<dbReference type="EC" id="3.4.23.36" evidence="1"/>
<dbReference type="EMBL" id="AP009351">
    <property type="protein sequence ID" value="BAF67379.1"/>
    <property type="molecule type" value="Genomic_DNA"/>
</dbReference>
<dbReference type="RefSeq" id="WP_000549207.1">
    <property type="nucleotide sequence ID" value="NZ_JBBIAE010000001.1"/>
</dbReference>
<dbReference type="SMR" id="A6QG97"/>
<dbReference type="KEGG" id="sae:NWMN_1107"/>
<dbReference type="HOGENOM" id="CLU_083252_3_0_9"/>
<dbReference type="UniPathway" id="UPA00665"/>
<dbReference type="Proteomes" id="UP000006386">
    <property type="component" value="Chromosome"/>
</dbReference>
<dbReference type="GO" id="GO:0005886">
    <property type="term" value="C:plasma membrane"/>
    <property type="evidence" value="ECO:0007669"/>
    <property type="project" value="UniProtKB-SubCell"/>
</dbReference>
<dbReference type="GO" id="GO:0004190">
    <property type="term" value="F:aspartic-type endopeptidase activity"/>
    <property type="evidence" value="ECO:0007669"/>
    <property type="project" value="UniProtKB-UniRule"/>
</dbReference>
<dbReference type="GO" id="GO:0006508">
    <property type="term" value="P:proteolysis"/>
    <property type="evidence" value="ECO:0007669"/>
    <property type="project" value="UniProtKB-KW"/>
</dbReference>
<dbReference type="HAMAP" id="MF_00161">
    <property type="entry name" value="LspA"/>
    <property type="match status" value="1"/>
</dbReference>
<dbReference type="InterPro" id="IPR001872">
    <property type="entry name" value="Peptidase_A8"/>
</dbReference>
<dbReference type="NCBIfam" id="TIGR00077">
    <property type="entry name" value="lspA"/>
    <property type="match status" value="1"/>
</dbReference>
<dbReference type="PANTHER" id="PTHR33695">
    <property type="entry name" value="LIPOPROTEIN SIGNAL PEPTIDASE"/>
    <property type="match status" value="1"/>
</dbReference>
<dbReference type="PANTHER" id="PTHR33695:SF1">
    <property type="entry name" value="LIPOPROTEIN SIGNAL PEPTIDASE"/>
    <property type="match status" value="1"/>
</dbReference>
<dbReference type="Pfam" id="PF01252">
    <property type="entry name" value="Peptidase_A8"/>
    <property type="match status" value="1"/>
</dbReference>
<dbReference type="PRINTS" id="PR00781">
    <property type="entry name" value="LIPOSIGPTASE"/>
</dbReference>
<dbReference type="PROSITE" id="PS00855">
    <property type="entry name" value="SPASE_II"/>
    <property type="match status" value="1"/>
</dbReference>